<evidence type="ECO:0000255" key="1">
    <source>
        <dbReference type="HAMAP-Rule" id="MF_01554"/>
    </source>
</evidence>
<comment type="function">
    <text evidence="1">Catalyzes the conversion of glucosamine-6-phosphate to glucosamine-1-phosphate.</text>
</comment>
<comment type="catalytic activity">
    <reaction evidence="1">
        <text>alpha-D-glucosamine 1-phosphate = D-glucosamine 6-phosphate</text>
        <dbReference type="Rhea" id="RHEA:23424"/>
        <dbReference type="ChEBI" id="CHEBI:58516"/>
        <dbReference type="ChEBI" id="CHEBI:58725"/>
        <dbReference type="EC" id="5.4.2.10"/>
    </reaction>
</comment>
<comment type="cofactor">
    <cofactor evidence="1">
        <name>Mg(2+)</name>
        <dbReference type="ChEBI" id="CHEBI:18420"/>
    </cofactor>
    <text evidence="1">Binds 1 Mg(2+) ion per subunit.</text>
</comment>
<comment type="PTM">
    <text evidence="1">Activated by phosphorylation.</text>
</comment>
<comment type="similarity">
    <text evidence="1">Belongs to the phosphohexose mutase family.</text>
</comment>
<gene>
    <name evidence="1" type="primary">glmM</name>
    <name type="ordered locus">MmarC5_0512</name>
</gene>
<keyword id="KW-0413">Isomerase</keyword>
<keyword id="KW-0460">Magnesium</keyword>
<keyword id="KW-0479">Metal-binding</keyword>
<keyword id="KW-0597">Phosphoprotein</keyword>
<proteinExistence type="inferred from homology"/>
<accession>A4FX97</accession>
<feature type="chain" id="PRO_0000337814" description="Phosphoglucosamine mutase">
    <location>
        <begin position="1"/>
        <end position="447"/>
    </location>
</feature>
<feature type="active site" description="Phosphoserine intermediate" evidence="1">
    <location>
        <position position="88"/>
    </location>
</feature>
<feature type="binding site" description="via phosphate group" evidence="1">
    <location>
        <position position="88"/>
    </location>
    <ligand>
        <name>Mg(2+)</name>
        <dbReference type="ChEBI" id="CHEBI:18420"/>
    </ligand>
</feature>
<feature type="binding site" evidence="1">
    <location>
        <position position="231"/>
    </location>
    <ligand>
        <name>Mg(2+)</name>
        <dbReference type="ChEBI" id="CHEBI:18420"/>
    </ligand>
</feature>
<feature type="binding site" evidence="1">
    <location>
        <position position="233"/>
    </location>
    <ligand>
        <name>Mg(2+)</name>
        <dbReference type="ChEBI" id="CHEBI:18420"/>
    </ligand>
</feature>
<feature type="binding site" evidence="1">
    <location>
        <position position="235"/>
    </location>
    <ligand>
        <name>Mg(2+)</name>
        <dbReference type="ChEBI" id="CHEBI:18420"/>
    </ligand>
</feature>
<feature type="modified residue" description="Phosphoserine" evidence="1">
    <location>
        <position position="88"/>
    </location>
</feature>
<protein>
    <recommendedName>
        <fullName evidence="1">Phosphoglucosamine mutase</fullName>
        <ecNumber evidence="1">5.4.2.10</ecNumber>
    </recommendedName>
</protein>
<dbReference type="EC" id="5.4.2.10" evidence="1"/>
<dbReference type="EMBL" id="CP000609">
    <property type="protein sequence ID" value="ABO34826.1"/>
    <property type="molecule type" value="Genomic_DNA"/>
</dbReference>
<dbReference type="RefSeq" id="WP_011868281.1">
    <property type="nucleotide sequence ID" value="NC_009135.1"/>
</dbReference>
<dbReference type="SMR" id="A4FX97"/>
<dbReference type="STRING" id="402880.MmarC5_0512"/>
<dbReference type="GeneID" id="4927780"/>
<dbReference type="KEGG" id="mmq:MmarC5_0512"/>
<dbReference type="eggNOG" id="arCOG00767">
    <property type="taxonomic scope" value="Archaea"/>
</dbReference>
<dbReference type="HOGENOM" id="CLU_016950_7_1_2"/>
<dbReference type="OrthoDB" id="10363at2157"/>
<dbReference type="Proteomes" id="UP000000253">
    <property type="component" value="Chromosome"/>
</dbReference>
<dbReference type="GO" id="GO:0000287">
    <property type="term" value="F:magnesium ion binding"/>
    <property type="evidence" value="ECO:0007669"/>
    <property type="project" value="UniProtKB-UniRule"/>
</dbReference>
<dbReference type="GO" id="GO:0008966">
    <property type="term" value="F:phosphoglucosamine mutase activity"/>
    <property type="evidence" value="ECO:0007669"/>
    <property type="project" value="UniProtKB-UniRule"/>
</dbReference>
<dbReference type="GO" id="GO:0005975">
    <property type="term" value="P:carbohydrate metabolic process"/>
    <property type="evidence" value="ECO:0007669"/>
    <property type="project" value="InterPro"/>
</dbReference>
<dbReference type="CDD" id="cd03087">
    <property type="entry name" value="PGM_like1"/>
    <property type="match status" value="1"/>
</dbReference>
<dbReference type="FunFam" id="3.40.120.10:FF:000001">
    <property type="entry name" value="Phosphoglucosamine mutase"/>
    <property type="match status" value="1"/>
</dbReference>
<dbReference type="FunFam" id="3.40.120.10:FF:000002">
    <property type="entry name" value="Phosphoglucosamine mutase"/>
    <property type="match status" value="1"/>
</dbReference>
<dbReference type="FunFam" id="3.30.310.50:FF:000009">
    <property type="entry name" value="Probable phosphoglucosamine mutase"/>
    <property type="match status" value="1"/>
</dbReference>
<dbReference type="Gene3D" id="3.40.120.10">
    <property type="entry name" value="Alpha-D-Glucose-1,6-Bisphosphate, subunit A, domain 3"/>
    <property type="match status" value="3"/>
</dbReference>
<dbReference type="Gene3D" id="3.30.310.50">
    <property type="entry name" value="Alpha-D-phosphohexomutase, C-terminal domain"/>
    <property type="match status" value="1"/>
</dbReference>
<dbReference type="HAMAP" id="MF_01554_A">
    <property type="entry name" value="GlmM_A"/>
    <property type="match status" value="1"/>
</dbReference>
<dbReference type="InterPro" id="IPR005844">
    <property type="entry name" value="A-D-PHexomutase_a/b/a-I"/>
</dbReference>
<dbReference type="InterPro" id="IPR016055">
    <property type="entry name" value="A-D-PHexomutase_a/b/a-I/II/III"/>
</dbReference>
<dbReference type="InterPro" id="IPR005845">
    <property type="entry name" value="A-D-PHexomutase_a/b/a-II"/>
</dbReference>
<dbReference type="InterPro" id="IPR005846">
    <property type="entry name" value="A-D-PHexomutase_a/b/a-III"/>
</dbReference>
<dbReference type="InterPro" id="IPR005843">
    <property type="entry name" value="A-D-PHexomutase_C"/>
</dbReference>
<dbReference type="InterPro" id="IPR036900">
    <property type="entry name" value="A-D-PHexomutase_C_sf"/>
</dbReference>
<dbReference type="InterPro" id="IPR016066">
    <property type="entry name" value="A-D-PHexomutase_CS"/>
</dbReference>
<dbReference type="InterPro" id="IPR005841">
    <property type="entry name" value="Alpha-D-phosphohexomutase_SF"/>
</dbReference>
<dbReference type="InterPro" id="IPR023666">
    <property type="entry name" value="GlmM_arc"/>
</dbReference>
<dbReference type="InterPro" id="IPR024086">
    <property type="entry name" value="GlmM_arc-type"/>
</dbReference>
<dbReference type="NCBIfam" id="TIGR03990">
    <property type="entry name" value="Arch_GlmM"/>
    <property type="match status" value="1"/>
</dbReference>
<dbReference type="PANTHER" id="PTHR43771">
    <property type="entry name" value="PHOSPHOMANNOMUTASE"/>
    <property type="match status" value="1"/>
</dbReference>
<dbReference type="PANTHER" id="PTHR43771:SF1">
    <property type="entry name" value="PHOSPHOMANNOMUTASE"/>
    <property type="match status" value="1"/>
</dbReference>
<dbReference type="Pfam" id="PF02878">
    <property type="entry name" value="PGM_PMM_I"/>
    <property type="match status" value="1"/>
</dbReference>
<dbReference type="Pfam" id="PF02879">
    <property type="entry name" value="PGM_PMM_II"/>
    <property type="match status" value="1"/>
</dbReference>
<dbReference type="Pfam" id="PF02880">
    <property type="entry name" value="PGM_PMM_III"/>
    <property type="match status" value="1"/>
</dbReference>
<dbReference type="Pfam" id="PF00408">
    <property type="entry name" value="PGM_PMM_IV"/>
    <property type="match status" value="1"/>
</dbReference>
<dbReference type="PRINTS" id="PR00509">
    <property type="entry name" value="PGMPMM"/>
</dbReference>
<dbReference type="SUPFAM" id="SSF55957">
    <property type="entry name" value="Phosphoglucomutase, C-terminal domain"/>
    <property type="match status" value="1"/>
</dbReference>
<dbReference type="SUPFAM" id="SSF53738">
    <property type="entry name" value="Phosphoglucomutase, first 3 domains"/>
    <property type="match status" value="3"/>
</dbReference>
<dbReference type="PROSITE" id="PS00710">
    <property type="entry name" value="PGM_PMM"/>
    <property type="match status" value="1"/>
</dbReference>
<reference key="1">
    <citation type="submission" date="2007-03" db="EMBL/GenBank/DDBJ databases">
        <title>Complete sequence of chromosome of Methanococcus maripaludis C5.</title>
        <authorList>
            <consortium name="US DOE Joint Genome Institute"/>
            <person name="Copeland A."/>
            <person name="Lucas S."/>
            <person name="Lapidus A."/>
            <person name="Barry K."/>
            <person name="Glavina del Rio T."/>
            <person name="Dalin E."/>
            <person name="Tice H."/>
            <person name="Pitluck S."/>
            <person name="Chertkov O."/>
            <person name="Brettin T."/>
            <person name="Bruce D."/>
            <person name="Han C."/>
            <person name="Detter J.C."/>
            <person name="Schmutz J."/>
            <person name="Larimer F."/>
            <person name="Land M."/>
            <person name="Hauser L."/>
            <person name="Kyrpides N."/>
            <person name="Mikhailova N."/>
            <person name="Sieprawska-Lupa M."/>
            <person name="Whitman W.B."/>
            <person name="Richardson P."/>
        </authorList>
    </citation>
    <scope>NUCLEOTIDE SEQUENCE [LARGE SCALE GENOMIC DNA]</scope>
    <source>
        <strain>C5 / ATCC BAA-1333</strain>
    </source>
</reference>
<organism>
    <name type="scientific">Methanococcus maripaludis (strain C5 / ATCC BAA-1333)</name>
    <dbReference type="NCBI Taxonomy" id="402880"/>
    <lineage>
        <taxon>Archaea</taxon>
        <taxon>Methanobacteriati</taxon>
        <taxon>Methanobacteriota</taxon>
        <taxon>Methanomada group</taxon>
        <taxon>Methanococci</taxon>
        <taxon>Methanococcales</taxon>
        <taxon>Methanococcaceae</taxon>
        <taxon>Methanococcus</taxon>
    </lineage>
</organism>
<sequence length="447" mass="49562">MKLFGTSGIRMKNLDPLIAYKVGYAISKNFKKAVIGRDTRTTGNLIESAITAGLLNGGCDVTTIGMVPTPVLGYSAKDYDLGIMITASHNPPEYNGIKLFNKNGTAFDPKQEKELENIINNDDFNEGTWDNIGCVIEDKTAVKNYSEYILQNLDIKTNFNVVVDCANAAGCVVSPNIFTEAGCKVISVNSHCDGRFVGRMPEPNEKNLKETVDIIKGLNSNCRNYIGIAHDGDADRMIAIDELGRVTDFDKLLAAFCKYIVQKTGADKIVTTVDASMAIDEYLNEFGAEVVRTKIGDVAVAEELEKTGAIFGGEPSGTWIHRDIHLTPDGILSGLRVLEMMEFYDKKLHEIIDEVPSYYNMREKILCPDNLKQQVMDYVSKEGEKIFEKKPETLDGVRFSFEKGWILIRPSGTESYVRVRVEAKEKDFAEKLMKTGISMVYTGISGN</sequence>
<name>GLMM_METM5</name>